<organismHost>
    <name type="scientific">Ctenopharyngodon idella</name>
    <name type="common">Grass carp</name>
    <name type="synonym">Leuciscus idella</name>
    <dbReference type="NCBI Taxonomy" id="7959"/>
</organismHost>
<accession>B2BNE3</accession>
<name>VP5_AQRVG</name>
<organism>
    <name type="scientific">Aquareovirus G (isolate American grass carp/USA/PB01-155/-)</name>
    <name type="common">AQRV-G</name>
    <dbReference type="NCBI Taxonomy" id="648234"/>
    <lineage>
        <taxon>Viruses</taxon>
        <taxon>Riboviria</taxon>
        <taxon>Orthornavirae</taxon>
        <taxon>Duplornaviricota</taxon>
        <taxon>Resentoviricetes</taxon>
        <taxon>Reovirales</taxon>
        <taxon>Spinareoviridae</taxon>
        <taxon>Aquareovirus</taxon>
        <taxon>Aquareovirus graminis</taxon>
    </lineage>
</organism>
<keyword id="KW-0167">Capsid protein</keyword>
<keyword id="KW-1035">Host cytoplasm</keyword>
<keyword id="KW-1037">Host cytoskeleton</keyword>
<keyword id="KW-1152">Outer capsid protein</keyword>
<keyword id="KW-1185">Reference proteome</keyword>
<keyword id="KW-0946">Virion</keyword>
<protein>
    <recommendedName>
        <fullName>Microtubule-associated protein VP5</fullName>
    </recommendedName>
</protein>
<proteinExistence type="inferred from homology"/>
<gene>
    <name type="primary">S5</name>
</gene>
<reference key="1">
    <citation type="journal article" date="2008" name="Virology">
        <title>Complete characterisation of the American grass carp reovirus genome (genus Aquareovirus: family Reoviridae) reveals an evolutionary link between aquareoviruses and coltiviruses.</title>
        <authorList>
            <person name="Mohd Jaafar F."/>
            <person name="Goodwin A.E."/>
            <person name="Belhouchet M."/>
            <person name="Merry G."/>
            <person name="Fang Q."/>
            <person name="Cantaloube J.F."/>
            <person name="Biagini P."/>
            <person name="de Micco P."/>
            <person name="Mertens P.P."/>
            <person name="Attoui H."/>
        </authorList>
    </citation>
    <scope>NUCLEOTIDE SEQUENCE [GENOMIC RNA]</scope>
</reference>
<sequence length="728" mass="80134">MITIVVIPTERFPWTDTNLLNSIDYRLNNIPKSNQRFAVYAPAWLRLQLEEAAVSLTPSQLLAAIQDIHVPVTSTFALLPKAKRFAQWLLDDPSSNIWHIPVTVLNVTATSKHPTSDIFNYVVGHVSPNAELATTASRVSGTQVVYTRTSKVLGAPLRLAAPTSYYSGYLSSQQLSHVYPSSWTPETFKKKEICFTILPSLTSPKTFLLDVDAPRDPSFPLSVMWPLLRNDAVKSHRLMPPNALLRRTVDPALKPEWSADVDPSFRALRLSRPRGANTSSCHNRHHVPVCDIQCALTPEPLNDSEKPPATHITIHAVPSDLLTVLDITVGKEYPLRLESGMYVPWMLMSLLMSDDVTLTGTRRSVKLETAHAAQRPFTQVKILRCVSARVTSVRAGPATYLNAVCLTLPKGSFKSTMIDTLPSLFPEWPVVSTTAIVDSDHLGDSLDPTFEQRFATMLETLPPGTVDQAIRVALATCPTADETALQLIVTSFNELYASCMTEAQRNRVPILTQQGRTLVFAHSDYEMLAANVPIQVIRGAIPIDHTVNIIARPNRVGGTALQLLLDYCYRMQASPIATMPAGALYRQLFGPWLRAKADCEQLTPVSLIAEVPARVMRAAGWTIQDDMPLIINVMRCYRNVDDQIDDVLTRTETSRAIITISADGIILVEYAPPLPLITLPSSILLPATYTATWLEPPRILLTGSNVSVTSGLSWAEVGSPLDVPPPGV</sequence>
<evidence type="ECO:0000250" key="1"/>
<evidence type="ECO:0000305" key="2"/>
<feature type="chain" id="PRO_0000404190" description="Microtubule-associated protein VP5">
    <location>
        <begin position="1"/>
        <end position="728"/>
    </location>
</feature>
<comment type="function">
    <text evidence="1">Minor inner capsid component. Displays NTPase and RNA 5'-triphosphatase (RTPase) activities. May function as a cofactor of polymerase. Associates with microtubules and plays a role in the formation, structural organization and morphology of viral inclusions, where the assembly of cores and the replication of viral RNA occur (By similarity).</text>
</comment>
<comment type="subcellular location">
    <subcellularLocation>
        <location evidence="2">Virion</location>
    </subcellularLocation>
    <subcellularLocation>
        <location evidence="1">Host cytoplasm</location>
        <location evidence="1">Host cytoskeleton</location>
    </subcellularLocation>
</comment>
<comment type="similarity">
    <text evidence="2">Belongs to the reoviridae microtubule-associated protein family.</text>
</comment>
<dbReference type="EMBL" id="EF589102">
    <property type="protein sequence ID" value="ABV01043.1"/>
    <property type="molecule type" value="Genomic_RNA"/>
</dbReference>
<dbReference type="RefSeq" id="YP_001837098.1">
    <property type="nucleotide sequence ID" value="NC_010588.1"/>
</dbReference>
<dbReference type="SMR" id="B2BNE3"/>
<dbReference type="KEGG" id="vg:6218803"/>
<dbReference type="Proteomes" id="UP000001674">
    <property type="component" value="Genome"/>
</dbReference>
<dbReference type="GO" id="GO:0030430">
    <property type="term" value="C:host cell cytoplasm"/>
    <property type="evidence" value="ECO:0007669"/>
    <property type="project" value="UniProtKB-KW"/>
</dbReference>
<dbReference type="GO" id="GO:0044163">
    <property type="term" value="C:host cytoskeleton"/>
    <property type="evidence" value="ECO:0007669"/>
    <property type="project" value="UniProtKB-SubCell"/>
</dbReference>
<dbReference type="GO" id="GO:0039624">
    <property type="term" value="C:viral outer capsid"/>
    <property type="evidence" value="ECO:0007669"/>
    <property type="project" value="UniProtKB-KW"/>
</dbReference>
<dbReference type="GO" id="GO:0005198">
    <property type="term" value="F:structural molecule activity"/>
    <property type="evidence" value="ECO:0007669"/>
    <property type="project" value="InterPro"/>
</dbReference>
<dbReference type="InterPro" id="IPR012494">
    <property type="entry name" value="Reovirus_Mu2"/>
</dbReference>
<dbReference type="Pfam" id="PF07781">
    <property type="entry name" value="Reovirus_Mu2"/>
    <property type="match status" value="1"/>
</dbReference>